<dbReference type="EMBL" id="AP007232">
    <property type="protein sequence ID" value="BAE47622.1"/>
    <property type="molecule type" value="Genomic_DNA"/>
</dbReference>
<dbReference type="EMBL" id="DQ383816">
    <property type="protein sequence ID" value="ABD47259.1"/>
    <property type="molecule type" value="Genomic_DNA"/>
</dbReference>
<dbReference type="RefSeq" id="YP_398355.1">
    <property type="nucleotide sequence ID" value="NC_007578.1"/>
</dbReference>
<dbReference type="SMR" id="Q332V0"/>
<dbReference type="GeneID" id="3772809"/>
<dbReference type="KEGG" id="lsv:3772809"/>
<dbReference type="OrthoDB" id="1558483at2759"/>
<dbReference type="GO" id="GO:0009535">
    <property type="term" value="C:chloroplast thylakoid membrane"/>
    <property type="evidence" value="ECO:0007669"/>
    <property type="project" value="UniProtKB-SubCell"/>
</dbReference>
<dbReference type="GO" id="GO:0009539">
    <property type="term" value="C:photosystem II reaction center"/>
    <property type="evidence" value="ECO:0007669"/>
    <property type="project" value="InterPro"/>
</dbReference>
<dbReference type="GO" id="GO:0015979">
    <property type="term" value="P:photosynthesis"/>
    <property type="evidence" value="ECO:0007669"/>
    <property type="project" value="UniProtKB-UniRule"/>
</dbReference>
<dbReference type="HAMAP" id="MF_00808">
    <property type="entry name" value="PSII_PsbT"/>
    <property type="match status" value="1"/>
</dbReference>
<dbReference type="InterPro" id="IPR001743">
    <property type="entry name" value="PSII_PsbT"/>
</dbReference>
<dbReference type="InterPro" id="IPR037268">
    <property type="entry name" value="PSII_PsbT_sf"/>
</dbReference>
<dbReference type="PANTHER" id="PTHR36411">
    <property type="match status" value="1"/>
</dbReference>
<dbReference type="PANTHER" id="PTHR36411:SF2">
    <property type="entry name" value="PHOTOSYSTEM II REACTION CENTER PROTEIN T"/>
    <property type="match status" value="1"/>
</dbReference>
<dbReference type="Pfam" id="PF01405">
    <property type="entry name" value="PsbT"/>
    <property type="match status" value="1"/>
</dbReference>
<dbReference type="SUPFAM" id="SSF161029">
    <property type="entry name" value="Photosystem II reaction center protein T, PsbT"/>
    <property type="match status" value="1"/>
</dbReference>
<organism>
    <name type="scientific">Lactuca sativa</name>
    <name type="common">Garden lettuce</name>
    <dbReference type="NCBI Taxonomy" id="4236"/>
    <lineage>
        <taxon>Eukaryota</taxon>
        <taxon>Viridiplantae</taxon>
        <taxon>Streptophyta</taxon>
        <taxon>Embryophyta</taxon>
        <taxon>Tracheophyta</taxon>
        <taxon>Spermatophyta</taxon>
        <taxon>Magnoliopsida</taxon>
        <taxon>eudicotyledons</taxon>
        <taxon>Gunneridae</taxon>
        <taxon>Pentapetalae</taxon>
        <taxon>asterids</taxon>
        <taxon>campanulids</taxon>
        <taxon>Asterales</taxon>
        <taxon>Asteraceae</taxon>
        <taxon>Cichorioideae</taxon>
        <taxon>Cichorieae</taxon>
        <taxon>Lactucinae</taxon>
        <taxon>Lactuca</taxon>
    </lineage>
</organism>
<gene>
    <name evidence="1" type="primary">psbT</name>
</gene>
<keyword id="KW-0150">Chloroplast</keyword>
<keyword id="KW-0472">Membrane</keyword>
<keyword id="KW-0602">Photosynthesis</keyword>
<keyword id="KW-0604">Photosystem II</keyword>
<keyword id="KW-0934">Plastid</keyword>
<keyword id="KW-0793">Thylakoid</keyword>
<keyword id="KW-0812">Transmembrane</keyword>
<keyword id="KW-1133">Transmembrane helix</keyword>
<sequence>MEALVYTFLLVSTLGIIFFAIFFREPPKVPTKK</sequence>
<evidence type="ECO:0000255" key="1">
    <source>
        <dbReference type="HAMAP-Rule" id="MF_00808"/>
    </source>
</evidence>
<accession>Q332V0</accession>
<geneLocation type="chloroplast"/>
<reference key="1">
    <citation type="journal article" date="2006" name="Transgenic Res.">
        <title>Efficient and stable transformation of Lactuca sativa L. cv. Cisco (lettuce) plastids.</title>
        <authorList>
            <person name="Kanamoto H."/>
            <person name="Yamashita A."/>
            <person name="Asao H."/>
            <person name="Okumura S."/>
            <person name="Takase H."/>
            <person name="Hattori M."/>
            <person name="Yokota A."/>
            <person name="Tomizawa K."/>
        </authorList>
    </citation>
    <scope>NUCLEOTIDE SEQUENCE [LARGE SCALE GENOMIC DNA]</scope>
    <source>
        <strain>cv. Cisco</strain>
    </source>
</reference>
<reference key="2">
    <citation type="submission" date="2006-01" db="EMBL/GenBank/DDBJ databases">
        <title>A comparison of the first two published chloroplast genomes in Asteraceae: Lactuca and Helianthus.</title>
        <authorList>
            <person name="Timme R.E."/>
            <person name="Kuehl J.V."/>
            <person name="Boore J.L."/>
            <person name="Jansen R.K."/>
        </authorList>
    </citation>
    <scope>NUCLEOTIDE SEQUENCE [LARGE SCALE GENOMIC DNA]</scope>
    <source>
        <strain>cv. Salinas</strain>
    </source>
</reference>
<name>PSBT_LACSA</name>
<protein>
    <recommendedName>
        <fullName evidence="1">Photosystem II reaction center protein T</fullName>
        <shortName evidence="1">PSII-T</shortName>
    </recommendedName>
</protein>
<comment type="function">
    <text evidence="1">Found at the monomer-monomer interface of the photosystem II (PS II) dimer, plays a role in assembly and dimerization of PSII. PSII is a light-driven water plastoquinone oxidoreductase, using light energy to abstract electrons from H(2)O, generating a proton gradient subsequently used for ATP formation.</text>
</comment>
<comment type="subunit">
    <text evidence="1">PSII is composed of 1 copy each of membrane proteins PsbA, PsbB, PsbC, PsbD, PsbE, PsbF, PsbH, PsbI, PsbJ, PsbK, PsbL, PsbM, PsbT, PsbY, PsbZ, Psb30/Ycf12, at least 3 peripheral proteins of the oxygen-evolving complex and a large number of cofactors. It forms dimeric complexes.</text>
</comment>
<comment type="subcellular location">
    <subcellularLocation>
        <location evidence="1">Plastid</location>
        <location evidence="1">Chloroplast thylakoid membrane</location>
        <topology evidence="1">Single-pass membrane protein</topology>
    </subcellularLocation>
</comment>
<comment type="similarity">
    <text evidence="1">Belongs to the PsbT family.</text>
</comment>
<proteinExistence type="inferred from homology"/>
<feature type="chain" id="PRO_0000276300" description="Photosystem II reaction center protein T">
    <location>
        <begin position="1"/>
        <end position="33"/>
    </location>
</feature>
<feature type="transmembrane region" description="Helical" evidence="1">
    <location>
        <begin position="3"/>
        <end position="23"/>
    </location>
</feature>